<keyword id="KW-0067">ATP-binding</keyword>
<keyword id="KW-0963">Cytoplasm</keyword>
<keyword id="KW-0347">Helicase</keyword>
<keyword id="KW-0378">Hydrolase</keyword>
<keyword id="KW-0547">Nucleotide-binding</keyword>
<keyword id="KW-1185">Reference proteome</keyword>
<keyword id="KW-0694">RNA-binding</keyword>
<feature type="chain" id="PRO_1000131286" description="ATP-dependent RNA helicase RhlB">
    <location>
        <begin position="1"/>
        <end position="421"/>
    </location>
</feature>
<feature type="domain" description="Helicase ATP-binding" evidence="1">
    <location>
        <begin position="40"/>
        <end position="219"/>
    </location>
</feature>
<feature type="domain" description="Helicase C-terminal" evidence="1">
    <location>
        <begin position="245"/>
        <end position="390"/>
    </location>
</feature>
<feature type="region of interest" description="Disordered" evidence="2">
    <location>
        <begin position="392"/>
        <end position="421"/>
    </location>
</feature>
<feature type="short sequence motif" description="Q motif">
    <location>
        <begin position="9"/>
        <end position="37"/>
    </location>
</feature>
<feature type="short sequence motif" description="DEAD box">
    <location>
        <begin position="165"/>
        <end position="168"/>
    </location>
</feature>
<feature type="compositionally biased region" description="Low complexity" evidence="2">
    <location>
        <begin position="402"/>
        <end position="414"/>
    </location>
</feature>
<feature type="binding site" evidence="1">
    <location>
        <begin position="53"/>
        <end position="60"/>
    </location>
    <ligand>
        <name>ATP</name>
        <dbReference type="ChEBI" id="CHEBI:30616"/>
    </ligand>
</feature>
<organism>
    <name type="scientific">Escherichia coli O45:K1 (strain S88 / ExPEC)</name>
    <dbReference type="NCBI Taxonomy" id="585035"/>
    <lineage>
        <taxon>Bacteria</taxon>
        <taxon>Pseudomonadati</taxon>
        <taxon>Pseudomonadota</taxon>
        <taxon>Gammaproteobacteria</taxon>
        <taxon>Enterobacterales</taxon>
        <taxon>Enterobacteriaceae</taxon>
        <taxon>Escherichia</taxon>
    </lineage>
</organism>
<reference key="1">
    <citation type="journal article" date="2009" name="PLoS Genet.">
        <title>Organised genome dynamics in the Escherichia coli species results in highly diverse adaptive paths.</title>
        <authorList>
            <person name="Touchon M."/>
            <person name="Hoede C."/>
            <person name="Tenaillon O."/>
            <person name="Barbe V."/>
            <person name="Baeriswyl S."/>
            <person name="Bidet P."/>
            <person name="Bingen E."/>
            <person name="Bonacorsi S."/>
            <person name="Bouchier C."/>
            <person name="Bouvet O."/>
            <person name="Calteau A."/>
            <person name="Chiapello H."/>
            <person name="Clermont O."/>
            <person name="Cruveiller S."/>
            <person name="Danchin A."/>
            <person name="Diard M."/>
            <person name="Dossat C."/>
            <person name="Karoui M.E."/>
            <person name="Frapy E."/>
            <person name="Garry L."/>
            <person name="Ghigo J.M."/>
            <person name="Gilles A.M."/>
            <person name="Johnson J."/>
            <person name="Le Bouguenec C."/>
            <person name="Lescat M."/>
            <person name="Mangenot S."/>
            <person name="Martinez-Jehanne V."/>
            <person name="Matic I."/>
            <person name="Nassif X."/>
            <person name="Oztas S."/>
            <person name="Petit M.A."/>
            <person name="Pichon C."/>
            <person name="Rouy Z."/>
            <person name="Ruf C.S."/>
            <person name="Schneider D."/>
            <person name="Tourret J."/>
            <person name="Vacherie B."/>
            <person name="Vallenet D."/>
            <person name="Medigue C."/>
            <person name="Rocha E.P.C."/>
            <person name="Denamur E."/>
        </authorList>
    </citation>
    <scope>NUCLEOTIDE SEQUENCE [LARGE SCALE GENOMIC DNA]</scope>
    <source>
        <strain>S88 / ExPEC</strain>
    </source>
</reference>
<accession>B7MGJ1</accession>
<sequence>MSKTHLTEQKFSDFALHPKVVEALEKKGFHNCTPIQALALPLTLAGRDVAGQAQTGTGKTMAFLTSTFHYLLSHPAIADRKVNQPRALIMAPTRELAVQIHADAEPLAEATGLKLGLAYGGDGYDKQLKVLESGVDILIGTTGRLIDYAKQNHINLGAIQVVVLDEADRMYDLGFIKDIRWLFRRMPPANQRLNMLFSATLSYRVRELAFEQMNNAEYIEVEPEQKTGHRIKEELFYPSNEEKMRLLQTLIEEEWPDRAIIFANTKHRCEEIWGHLAADGHRVGLLTGDVAQKKRLRILDEFTRGDLDILVATDVAARGLHIPAVTHVFNYDLPDDCEDYVHRIGRTGRAGASGHSISLACEEYALNLPAIETYIGHSIPVSKYNPDALMTDLPKPLRLTRPRTGNGPRRTGAPRNRRRSG</sequence>
<dbReference type="EC" id="3.6.4.13" evidence="1"/>
<dbReference type="EMBL" id="CU928161">
    <property type="protein sequence ID" value="CAR05399.1"/>
    <property type="molecule type" value="Genomic_DNA"/>
</dbReference>
<dbReference type="RefSeq" id="WP_000047499.1">
    <property type="nucleotide sequence ID" value="NC_011742.1"/>
</dbReference>
<dbReference type="SMR" id="B7MGJ1"/>
<dbReference type="GeneID" id="93778164"/>
<dbReference type="KEGG" id="ecz:ECS88_4202"/>
<dbReference type="HOGENOM" id="CLU_003041_1_3_6"/>
<dbReference type="Proteomes" id="UP000000747">
    <property type="component" value="Chromosome"/>
</dbReference>
<dbReference type="GO" id="GO:0005829">
    <property type="term" value="C:cytosol"/>
    <property type="evidence" value="ECO:0007669"/>
    <property type="project" value="TreeGrafter"/>
</dbReference>
<dbReference type="GO" id="GO:0005524">
    <property type="term" value="F:ATP binding"/>
    <property type="evidence" value="ECO:0007669"/>
    <property type="project" value="UniProtKB-UniRule"/>
</dbReference>
<dbReference type="GO" id="GO:0016887">
    <property type="term" value="F:ATP hydrolysis activity"/>
    <property type="evidence" value="ECO:0007669"/>
    <property type="project" value="RHEA"/>
</dbReference>
<dbReference type="GO" id="GO:0003723">
    <property type="term" value="F:RNA binding"/>
    <property type="evidence" value="ECO:0007669"/>
    <property type="project" value="UniProtKB-UniRule"/>
</dbReference>
<dbReference type="GO" id="GO:0003724">
    <property type="term" value="F:RNA helicase activity"/>
    <property type="evidence" value="ECO:0007669"/>
    <property type="project" value="UniProtKB-UniRule"/>
</dbReference>
<dbReference type="GO" id="GO:0006401">
    <property type="term" value="P:RNA catabolic process"/>
    <property type="evidence" value="ECO:0007669"/>
    <property type="project" value="UniProtKB-UniRule"/>
</dbReference>
<dbReference type="CDD" id="cd00268">
    <property type="entry name" value="DEADc"/>
    <property type="match status" value="1"/>
</dbReference>
<dbReference type="CDD" id="cd18787">
    <property type="entry name" value="SF2_C_DEAD"/>
    <property type="match status" value="1"/>
</dbReference>
<dbReference type="FunFam" id="3.40.50.300:FF:000008">
    <property type="entry name" value="ATP-dependent RNA helicase RhlB"/>
    <property type="match status" value="1"/>
</dbReference>
<dbReference type="FunFam" id="3.40.50.300:FF:000312">
    <property type="entry name" value="ATP-dependent RNA helicase RhlB"/>
    <property type="match status" value="1"/>
</dbReference>
<dbReference type="Gene3D" id="3.40.50.300">
    <property type="entry name" value="P-loop containing nucleotide triphosphate hydrolases"/>
    <property type="match status" value="2"/>
</dbReference>
<dbReference type="HAMAP" id="MF_00661">
    <property type="entry name" value="DEAD_helicase_RhlB"/>
    <property type="match status" value="1"/>
</dbReference>
<dbReference type="InterPro" id="IPR011545">
    <property type="entry name" value="DEAD/DEAH_box_helicase_dom"/>
</dbReference>
<dbReference type="InterPro" id="IPR050079">
    <property type="entry name" value="DEAD_box_RNA_helicase"/>
</dbReference>
<dbReference type="InterPro" id="IPR014001">
    <property type="entry name" value="Helicase_ATP-bd"/>
</dbReference>
<dbReference type="InterPro" id="IPR001650">
    <property type="entry name" value="Helicase_C-like"/>
</dbReference>
<dbReference type="InterPro" id="IPR027417">
    <property type="entry name" value="P-loop_NTPase"/>
</dbReference>
<dbReference type="InterPro" id="IPR000629">
    <property type="entry name" value="RNA-helicase_DEAD-box_CS"/>
</dbReference>
<dbReference type="InterPro" id="IPR023554">
    <property type="entry name" value="RNA_helicase_ATP-dep_RhlB"/>
</dbReference>
<dbReference type="InterPro" id="IPR014014">
    <property type="entry name" value="RNA_helicase_DEAD_Q_motif"/>
</dbReference>
<dbReference type="NCBIfam" id="NF003419">
    <property type="entry name" value="PRK04837.1"/>
    <property type="match status" value="1"/>
</dbReference>
<dbReference type="PANTHER" id="PTHR47959:SF10">
    <property type="entry name" value="ATP-DEPENDENT RNA HELICASE RHLB"/>
    <property type="match status" value="1"/>
</dbReference>
<dbReference type="PANTHER" id="PTHR47959">
    <property type="entry name" value="ATP-DEPENDENT RNA HELICASE RHLE-RELATED"/>
    <property type="match status" value="1"/>
</dbReference>
<dbReference type="Pfam" id="PF00270">
    <property type="entry name" value="DEAD"/>
    <property type="match status" value="1"/>
</dbReference>
<dbReference type="Pfam" id="PF00271">
    <property type="entry name" value="Helicase_C"/>
    <property type="match status" value="1"/>
</dbReference>
<dbReference type="SMART" id="SM00487">
    <property type="entry name" value="DEXDc"/>
    <property type="match status" value="1"/>
</dbReference>
<dbReference type="SMART" id="SM00490">
    <property type="entry name" value="HELICc"/>
    <property type="match status" value="1"/>
</dbReference>
<dbReference type="SUPFAM" id="SSF52540">
    <property type="entry name" value="P-loop containing nucleoside triphosphate hydrolases"/>
    <property type="match status" value="1"/>
</dbReference>
<dbReference type="PROSITE" id="PS00039">
    <property type="entry name" value="DEAD_ATP_HELICASE"/>
    <property type="match status" value="1"/>
</dbReference>
<dbReference type="PROSITE" id="PS51192">
    <property type="entry name" value="HELICASE_ATP_BIND_1"/>
    <property type="match status" value="1"/>
</dbReference>
<dbReference type="PROSITE" id="PS51194">
    <property type="entry name" value="HELICASE_CTER"/>
    <property type="match status" value="1"/>
</dbReference>
<dbReference type="PROSITE" id="PS51195">
    <property type="entry name" value="Q_MOTIF"/>
    <property type="match status" value="1"/>
</dbReference>
<comment type="function">
    <text evidence="1">DEAD-box RNA helicase involved in RNA degradation. Has RNA-dependent ATPase activity and unwinds double-stranded RNA.</text>
</comment>
<comment type="catalytic activity">
    <reaction evidence="1">
        <text>ATP + H2O = ADP + phosphate + H(+)</text>
        <dbReference type="Rhea" id="RHEA:13065"/>
        <dbReference type="ChEBI" id="CHEBI:15377"/>
        <dbReference type="ChEBI" id="CHEBI:15378"/>
        <dbReference type="ChEBI" id="CHEBI:30616"/>
        <dbReference type="ChEBI" id="CHEBI:43474"/>
        <dbReference type="ChEBI" id="CHEBI:456216"/>
        <dbReference type="EC" id="3.6.4.13"/>
    </reaction>
</comment>
<comment type="subunit">
    <text evidence="1">Component of the RNA degradosome, which is a multiprotein complex involved in RNA processing and mRNA degradation.</text>
</comment>
<comment type="subcellular location">
    <subcellularLocation>
        <location evidence="1">Cytoplasm</location>
    </subcellularLocation>
</comment>
<comment type="similarity">
    <text evidence="1">Belongs to the DEAD box helicase family. RhlB subfamily.</text>
</comment>
<name>RHLB_ECO45</name>
<gene>
    <name evidence="1" type="primary">rhlB</name>
    <name type="ordered locus">ECS88_4202</name>
</gene>
<protein>
    <recommendedName>
        <fullName evidence="1">ATP-dependent RNA helicase RhlB</fullName>
        <ecNumber evidence="1">3.6.4.13</ecNumber>
    </recommendedName>
</protein>
<evidence type="ECO:0000255" key="1">
    <source>
        <dbReference type="HAMAP-Rule" id="MF_00661"/>
    </source>
</evidence>
<evidence type="ECO:0000256" key="2">
    <source>
        <dbReference type="SAM" id="MobiDB-lite"/>
    </source>
</evidence>
<proteinExistence type="inferred from homology"/>